<accession>P80744</accession>
<dbReference type="Proteomes" id="UP000076420">
    <property type="component" value="Unassembled WGS sequence"/>
</dbReference>
<dbReference type="Proteomes" id="UP001165740">
    <property type="component" value="Unplaced"/>
</dbReference>
<dbReference type="GO" id="GO:0005576">
    <property type="term" value="C:extracellular region"/>
    <property type="evidence" value="ECO:0007669"/>
    <property type="project" value="UniProtKB-SubCell"/>
</dbReference>
<dbReference type="GO" id="GO:0030246">
    <property type="term" value="F:carbohydrate binding"/>
    <property type="evidence" value="ECO:0007669"/>
    <property type="project" value="UniProtKB-KW"/>
</dbReference>
<feature type="chain" id="PRO_0000084396" description="Hemolymph 65 kDa lectin BG05">
    <location>
        <begin position="1" status="less than"/>
        <end position="16" status="greater than"/>
    </location>
</feature>
<feature type="non-terminal residue">
    <location>
        <position position="1"/>
    </location>
</feature>
<feature type="non-terminal residue">
    <location>
        <position position="16"/>
    </location>
</feature>
<keyword id="KW-0903">Direct protein sequencing</keyword>
<keyword id="KW-0430">Lectin</keyword>
<keyword id="KW-1185">Reference proteome</keyword>
<keyword id="KW-0964">Secreted</keyword>
<organism>
    <name type="scientific">Biomphalaria glabrata</name>
    <name type="common">Bloodfluke planorb</name>
    <name type="synonym">Freshwater snail</name>
    <dbReference type="NCBI Taxonomy" id="6526"/>
    <lineage>
        <taxon>Eukaryota</taxon>
        <taxon>Metazoa</taxon>
        <taxon>Spiralia</taxon>
        <taxon>Lophotrochozoa</taxon>
        <taxon>Mollusca</taxon>
        <taxon>Gastropoda</taxon>
        <taxon>Heterobranchia</taxon>
        <taxon>Euthyneura</taxon>
        <taxon>Panpulmonata</taxon>
        <taxon>Hygrophila</taxon>
        <taxon>Lymnaeoidea</taxon>
        <taxon>Planorbidae</taxon>
        <taxon>Biomphalaria</taxon>
    </lineage>
</organism>
<reference key="1">
    <citation type="journal article" date="1997" name="Proc. Natl. Acad. Sci. U.S.A.">
        <title>A family of fibrinogen-related proteins that precipitates parasite-derived molecules is produced by an invertebrate after infection.</title>
        <authorList>
            <person name="Adema C.M."/>
            <person name="Hertel L.A."/>
            <person name="Miller R.D."/>
            <person name="Loker E.S."/>
        </authorList>
    </citation>
    <scope>PROTEIN SEQUENCE</scope>
    <source>
        <strain>M-line</strain>
        <tissue>Hemolymph</tissue>
    </source>
</reference>
<gene>
    <name type="primary">BG05</name>
</gene>
<sequence>LEIADLAQYVVDLTAR</sequence>
<comment type="function">
    <text>Binds and precipitates antigens of the parasite Echinostoma paraensei.</text>
</comment>
<comment type="subcellular location">
    <subcellularLocation>
        <location>Secreted</location>
    </subcellularLocation>
</comment>
<comment type="tissue specificity">
    <text>Hemolymph.</text>
</comment>
<comment type="induction">
    <text>By infection.</text>
</comment>
<protein>
    <recommendedName>
        <fullName>Hemolymph 65 kDa lectin BG05</fullName>
    </recommendedName>
</protein>
<name>LE05_BIOGL</name>
<proteinExistence type="evidence at protein level"/>